<feature type="chain" id="PRO_1000058789" description="Adenylate kinase">
    <location>
        <begin position="1"/>
        <end position="217"/>
    </location>
</feature>
<feature type="region of interest" description="NMP" evidence="1">
    <location>
        <begin position="31"/>
        <end position="61"/>
    </location>
</feature>
<feature type="region of interest" description="LID">
    <location>
        <begin position="124"/>
        <end position="161"/>
    </location>
</feature>
<feature type="binding site" evidence="1">
    <location>
        <begin position="11"/>
        <end position="16"/>
    </location>
    <ligand>
        <name>ATP</name>
        <dbReference type="ChEBI" id="CHEBI:30616"/>
    </ligand>
</feature>
<feature type="binding site" evidence="1">
    <location>
        <position position="32"/>
    </location>
    <ligand>
        <name>AMP</name>
        <dbReference type="ChEBI" id="CHEBI:456215"/>
    </ligand>
</feature>
<feature type="binding site" evidence="1">
    <location>
        <position position="37"/>
    </location>
    <ligand>
        <name>AMP</name>
        <dbReference type="ChEBI" id="CHEBI:456215"/>
    </ligand>
</feature>
<feature type="binding site" evidence="1">
    <location>
        <begin position="59"/>
        <end position="61"/>
    </location>
    <ligand>
        <name>AMP</name>
        <dbReference type="ChEBI" id="CHEBI:456215"/>
    </ligand>
</feature>
<feature type="binding site" evidence="1">
    <location>
        <begin position="87"/>
        <end position="90"/>
    </location>
    <ligand>
        <name>AMP</name>
        <dbReference type="ChEBI" id="CHEBI:456215"/>
    </ligand>
</feature>
<feature type="binding site" evidence="1">
    <location>
        <position position="94"/>
    </location>
    <ligand>
        <name>AMP</name>
        <dbReference type="ChEBI" id="CHEBI:456215"/>
    </ligand>
</feature>
<feature type="binding site" evidence="1">
    <location>
        <position position="125"/>
    </location>
    <ligand>
        <name>ATP</name>
        <dbReference type="ChEBI" id="CHEBI:30616"/>
    </ligand>
</feature>
<feature type="binding site" evidence="1">
    <location>
        <begin position="134"/>
        <end position="135"/>
    </location>
    <ligand>
        <name>ATP</name>
        <dbReference type="ChEBI" id="CHEBI:30616"/>
    </ligand>
</feature>
<feature type="binding site" evidence="1">
    <location>
        <position position="158"/>
    </location>
    <ligand>
        <name>AMP</name>
        <dbReference type="ChEBI" id="CHEBI:456215"/>
    </ligand>
</feature>
<feature type="binding site" evidence="1">
    <location>
        <position position="169"/>
    </location>
    <ligand>
        <name>AMP</name>
        <dbReference type="ChEBI" id="CHEBI:456215"/>
    </ligand>
</feature>
<feature type="binding site" evidence="1">
    <location>
        <position position="202"/>
    </location>
    <ligand>
        <name>ATP</name>
        <dbReference type="ChEBI" id="CHEBI:30616"/>
    </ligand>
</feature>
<organism>
    <name type="scientific">Blochmanniella pennsylvanica (strain BPEN)</name>
    <dbReference type="NCBI Taxonomy" id="291272"/>
    <lineage>
        <taxon>Bacteria</taxon>
        <taxon>Pseudomonadati</taxon>
        <taxon>Pseudomonadota</taxon>
        <taxon>Gammaproteobacteria</taxon>
        <taxon>Enterobacterales</taxon>
        <taxon>Enterobacteriaceae</taxon>
        <taxon>ant endosymbionts</taxon>
        <taxon>Candidatus Blochmanniella</taxon>
    </lineage>
</organism>
<accession>Q493A3</accession>
<dbReference type="EC" id="2.7.4.3" evidence="1"/>
<dbReference type="EMBL" id="CP000016">
    <property type="protein sequence ID" value="AAZ40941.1"/>
    <property type="molecule type" value="Genomic_DNA"/>
</dbReference>
<dbReference type="RefSeq" id="WP_011282848.1">
    <property type="nucleotide sequence ID" value="NC_007292.1"/>
</dbReference>
<dbReference type="SMR" id="Q493A3"/>
<dbReference type="STRING" id="291272.BPEN_310"/>
<dbReference type="KEGG" id="bpn:BPEN_310"/>
<dbReference type="eggNOG" id="COG0563">
    <property type="taxonomic scope" value="Bacteria"/>
</dbReference>
<dbReference type="HOGENOM" id="CLU_032354_1_2_6"/>
<dbReference type="OrthoDB" id="9805030at2"/>
<dbReference type="UniPathway" id="UPA00588">
    <property type="reaction ID" value="UER00649"/>
</dbReference>
<dbReference type="Proteomes" id="UP000007794">
    <property type="component" value="Chromosome"/>
</dbReference>
<dbReference type="GO" id="GO:0005737">
    <property type="term" value="C:cytoplasm"/>
    <property type="evidence" value="ECO:0007669"/>
    <property type="project" value="UniProtKB-SubCell"/>
</dbReference>
<dbReference type="GO" id="GO:0004017">
    <property type="term" value="F:adenylate kinase activity"/>
    <property type="evidence" value="ECO:0007669"/>
    <property type="project" value="UniProtKB-UniRule"/>
</dbReference>
<dbReference type="GO" id="GO:0005524">
    <property type="term" value="F:ATP binding"/>
    <property type="evidence" value="ECO:0007669"/>
    <property type="project" value="UniProtKB-UniRule"/>
</dbReference>
<dbReference type="GO" id="GO:0044209">
    <property type="term" value="P:AMP salvage"/>
    <property type="evidence" value="ECO:0007669"/>
    <property type="project" value="UniProtKB-UniRule"/>
</dbReference>
<dbReference type="CDD" id="cd01428">
    <property type="entry name" value="ADK"/>
    <property type="match status" value="1"/>
</dbReference>
<dbReference type="FunFam" id="3.40.50.300:FF:000106">
    <property type="entry name" value="Adenylate kinase mitochondrial"/>
    <property type="match status" value="1"/>
</dbReference>
<dbReference type="Gene3D" id="3.40.50.300">
    <property type="entry name" value="P-loop containing nucleotide triphosphate hydrolases"/>
    <property type="match status" value="1"/>
</dbReference>
<dbReference type="HAMAP" id="MF_00235">
    <property type="entry name" value="Adenylate_kinase_Adk"/>
    <property type="match status" value="1"/>
</dbReference>
<dbReference type="InterPro" id="IPR006259">
    <property type="entry name" value="Adenyl_kin_sub"/>
</dbReference>
<dbReference type="InterPro" id="IPR000850">
    <property type="entry name" value="Adenylat/UMP-CMP_kin"/>
</dbReference>
<dbReference type="InterPro" id="IPR033690">
    <property type="entry name" value="Adenylat_kinase_CS"/>
</dbReference>
<dbReference type="InterPro" id="IPR007862">
    <property type="entry name" value="Adenylate_kinase_lid-dom"/>
</dbReference>
<dbReference type="InterPro" id="IPR027417">
    <property type="entry name" value="P-loop_NTPase"/>
</dbReference>
<dbReference type="NCBIfam" id="TIGR01351">
    <property type="entry name" value="adk"/>
    <property type="match status" value="1"/>
</dbReference>
<dbReference type="NCBIfam" id="NF001379">
    <property type="entry name" value="PRK00279.1-1"/>
    <property type="match status" value="1"/>
</dbReference>
<dbReference type="PANTHER" id="PTHR23359">
    <property type="entry name" value="NUCLEOTIDE KINASE"/>
    <property type="match status" value="1"/>
</dbReference>
<dbReference type="Pfam" id="PF00406">
    <property type="entry name" value="ADK"/>
    <property type="match status" value="1"/>
</dbReference>
<dbReference type="Pfam" id="PF05191">
    <property type="entry name" value="ADK_lid"/>
    <property type="match status" value="1"/>
</dbReference>
<dbReference type="PRINTS" id="PR00094">
    <property type="entry name" value="ADENYLTKNASE"/>
</dbReference>
<dbReference type="SUPFAM" id="SSF52540">
    <property type="entry name" value="P-loop containing nucleoside triphosphate hydrolases"/>
    <property type="match status" value="1"/>
</dbReference>
<dbReference type="PROSITE" id="PS00113">
    <property type="entry name" value="ADENYLATE_KINASE"/>
    <property type="match status" value="1"/>
</dbReference>
<reference key="1">
    <citation type="journal article" date="2005" name="Genome Res.">
        <title>Genome sequence of Blochmannia pennsylvanicus indicates parallel evolutionary trends among bacterial mutualists of insects.</title>
        <authorList>
            <person name="Degnan P.H."/>
            <person name="Lazarus A.B."/>
            <person name="Wernegreen J.J."/>
        </authorList>
    </citation>
    <scope>NUCLEOTIDE SEQUENCE [LARGE SCALE GENOMIC DNA]</scope>
    <source>
        <strain>BPEN</strain>
    </source>
</reference>
<sequence>MIRIIFLGPPGSGKGTQAHLIANKYNIPNISTGTMLRQALTRSTHKSYELHKNIMHTGDLVNDEFMVQLISTRINQNDCRNGFLLDGFPRTILQAKSMKQCKIFVNYIIEFFASDSVIIDRIAGRRIHVGSGRTYHIKFNPPRNYGLDDITGEILTTRKDDHEEAIRKRLSNYYQHTEPVLDYYREESKYKKMKYFSVDGNRDISKIYKELINIISS</sequence>
<comment type="function">
    <text evidence="1">Catalyzes the reversible transfer of the terminal phosphate group between ATP and AMP. Plays an important role in cellular energy homeostasis and in adenine nucleotide metabolism.</text>
</comment>
<comment type="catalytic activity">
    <reaction evidence="1">
        <text>AMP + ATP = 2 ADP</text>
        <dbReference type="Rhea" id="RHEA:12973"/>
        <dbReference type="ChEBI" id="CHEBI:30616"/>
        <dbReference type="ChEBI" id="CHEBI:456215"/>
        <dbReference type="ChEBI" id="CHEBI:456216"/>
        <dbReference type="EC" id="2.7.4.3"/>
    </reaction>
</comment>
<comment type="pathway">
    <text evidence="1">Purine metabolism; AMP biosynthesis via salvage pathway; AMP from ADP: step 1/1.</text>
</comment>
<comment type="subunit">
    <text evidence="1">Monomer.</text>
</comment>
<comment type="subcellular location">
    <subcellularLocation>
        <location evidence="1">Cytoplasm</location>
    </subcellularLocation>
</comment>
<comment type="domain">
    <text evidence="1">Consists of three domains, a large central CORE domain and two small peripheral domains, NMPbind and LID, which undergo movements during catalysis. The LID domain closes over the site of phosphoryl transfer upon ATP binding. Assembling and dissambling the active center during each catalytic cycle provides an effective means to prevent ATP hydrolysis.</text>
</comment>
<comment type="similarity">
    <text evidence="1">Belongs to the adenylate kinase family.</text>
</comment>
<protein>
    <recommendedName>
        <fullName evidence="1">Adenylate kinase</fullName>
        <shortName evidence="1">AK</shortName>
        <ecNumber evidence="1">2.7.4.3</ecNumber>
    </recommendedName>
    <alternativeName>
        <fullName evidence="1">ATP-AMP transphosphorylase</fullName>
    </alternativeName>
    <alternativeName>
        <fullName evidence="1">ATP:AMP phosphotransferase</fullName>
    </alternativeName>
    <alternativeName>
        <fullName evidence="1">Adenylate monophosphate kinase</fullName>
    </alternativeName>
</protein>
<keyword id="KW-0067">ATP-binding</keyword>
<keyword id="KW-0963">Cytoplasm</keyword>
<keyword id="KW-0418">Kinase</keyword>
<keyword id="KW-0545">Nucleotide biosynthesis</keyword>
<keyword id="KW-0547">Nucleotide-binding</keyword>
<keyword id="KW-1185">Reference proteome</keyword>
<keyword id="KW-0808">Transferase</keyword>
<proteinExistence type="inferred from homology"/>
<name>KAD_BLOPB</name>
<gene>
    <name evidence="1" type="primary">adk</name>
    <name type="ordered locus">BPEN_310</name>
</gene>
<evidence type="ECO:0000255" key="1">
    <source>
        <dbReference type="HAMAP-Rule" id="MF_00235"/>
    </source>
</evidence>